<proteinExistence type="inferred from homology"/>
<evidence type="ECO:0000255" key="1">
    <source>
        <dbReference type="HAMAP-Rule" id="MF_00175"/>
    </source>
</evidence>
<evidence type="ECO:0000255" key="2">
    <source>
        <dbReference type="PROSITE-ProRule" id="PRU01250"/>
    </source>
</evidence>
<sequence length="423" mass="46225">MAGKNDGKIRCSFCGKTQDQVNRLISGPNGAFICDECIDICAEILEEEGVDGHEDKSSAKDDINLVTPEELKAFLDDYVIGQDQAKKVLSVAVYNHYKRVLAGDTSDVELQKSNILMLGPTGSGKTLLAQTLARVINVPFAIADATTLTEAGYVGEDVENILLKLIQAADYDIERAEHGIIYIDEIDKITKKSENVSITRDVSGEGVQQALLKILEGTEASVPPQGGRKHPQQELIPIDTTNILFICGGAFDGLEKIIDSRMDTSSIGFNSDVKSKTELNVGEAFKHALPQDFVKFGLIPEFIGRVPITVSLEALDRDALIRILKEPKNSLIKQYTKLFELDGVGLEFTDDAVNAIADKALERKTGARGLRAIMEAVMLDLMYRIPSDKSISKCVIDKDTVEENLKLDGDCVPEAYIEEKAAS</sequence>
<organism>
    <name type="scientific">Agathobacter rectalis (strain ATCC 33656 / DSM 3377 / JCM 17463 / KCTC 5835 / VPI 0990)</name>
    <name type="common">Eubacterium rectale</name>
    <dbReference type="NCBI Taxonomy" id="515619"/>
    <lineage>
        <taxon>Bacteria</taxon>
        <taxon>Bacillati</taxon>
        <taxon>Bacillota</taxon>
        <taxon>Clostridia</taxon>
        <taxon>Lachnospirales</taxon>
        <taxon>Lachnospiraceae</taxon>
        <taxon>Agathobacter</taxon>
    </lineage>
</organism>
<comment type="function">
    <text evidence="1">ATP-dependent specificity component of the Clp protease. It directs the protease to specific substrates. Can perform chaperone functions in the absence of ClpP.</text>
</comment>
<comment type="subunit">
    <text evidence="1">Component of the ClpX-ClpP complex. Forms a hexameric ring that, in the presence of ATP, binds to fourteen ClpP subunits assembled into a disk-like structure with a central cavity, resembling the structure of eukaryotic proteasomes.</text>
</comment>
<comment type="similarity">
    <text evidence="1">Belongs to the ClpX chaperone family.</text>
</comment>
<keyword id="KW-0067">ATP-binding</keyword>
<keyword id="KW-0143">Chaperone</keyword>
<keyword id="KW-0479">Metal-binding</keyword>
<keyword id="KW-0547">Nucleotide-binding</keyword>
<keyword id="KW-0862">Zinc</keyword>
<accession>C4ZGF5</accession>
<protein>
    <recommendedName>
        <fullName evidence="1">ATP-dependent Clp protease ATP-binding subunit ClpX</fullName>
    </recommendedName>
</protein>
<reference key="1">
    <citation type="journal article" date="2009" name="Proc. Natl. Acad. Sci. U.S.A.">
        <title>Characterizing a model human gut microbiota composed of members of its two dominant bacterial phyla.</title>
        <authorList>
            <person name="Mahowald M.A."/>
            <person name="Rey F.E."/>
            <person name="Seedorf H."/>
            <person name="Turnbaugh P.J."/>
            <person name="Fulton R.S."/>
            <person name="Wollam A."/>
            <person name="Shah N."/>
            <person name="Wang C."/>
            <person name="Magrini V."/>
            <person name="Wilson R.K."/>
            <person name="Cantarel B.L."/>
            <person name="Coutinho P.M."/>
            <person name="Henrissat B."/>
            <person name="Crock L.W."/>
            <person name="Russell A."/>
            <person name="Verberkmoes N.C."/>
            <person name="Hettich R.L."/>
            <person name="Gordon J.I."/>
        </authorList>
    </citation>
    <scope>NUCLEOTIDE SEQUENCE [LARGE SCALE GENOMIC DNA]</scope>
    <source>
        <strain>ATCC 33656 / DSM 3377 / JCM 17463 / KCTC 5835 / LMG 30912 / VPI 0990</strain>
    </source>
</reference>
<name>CLPX_AGARV</name>
<dbReference type="EMBL" id="CP001107">
    <property type="protein sequence ID" value="ACR74752.1"/>
    <property type="molecule type" value="Genomic_DNA"/>
</dbReference>
<dbReference type="RefSeq" id="WP_012741853.1">
    <property type="nucleotide sequence ID" value="NC_012781.1"/>
</dbReference>
<dbReference type="SMR" id="C4ZGF5"/>
<dbReference type="STRING" id="515619.EUBREC_0990"/>
<dbReference type="PaxDb" id="515619-EUBREC_0990"/>
<dbReference type="GeneID" id="86987849"/>
<dbReference type="KEGG" id="ere:EUBREC_0990"/>
<dbReference type="HOGENOM" id="CLU_014218_8_2_9"/>
<dbReference type="Proteomes" id="UP000001477">
    <property type="component" value="Chromosome"/>
</dbReference>
<dbReference type="GO" id="GO:0009376">
    <property type="term" value="C:HslUV protease complex"/>
    <property type="evidence" value="ECO:0007669"/>
    <property type="project" value="TreeGrafter"/>
</dbReference>
<dbReference type="GO" id="GO:0005524">
    <property type="term" value="F:ATP binding"/>
    <property type="evidence" value="ECO:0007669"/>
    <property type="project" value="UniProtKB-UniRule"/>
</dbReference>
<dbReference type="GO" id="GO:0016887">
    <property type="term" value="F:ATP hydrolysis activity"/>
    <property type="evidence" value="ECO:0007669"/>
    <property type="project" value="InterPro"/>
</dbReference>
<dbReference type="GO" id="GO:0140662">
    <property type="term" value="F:ATP-dependent protein folding chaperone"/>
    <property type="evidence" value="ECO:0007669"/>
    <property type="project" value="InterPro"/>
</dbReference>
<dbReference type="GO" id="GO:0046983">
    <property type="term" value="F:protein dimerization activity"/>
    <property type="evidence" value="ECO:0007669"/>
    <property type="project" value="InterPro"/>
</dbReference>
<dbReference type="GO" id="GO:0051082">
    <property type="term" value="F:unfolded protein binding"/>
    <property type="evidence" value="ECO:0007669"/>
    <property type="project" value="UniProtKB-UniRule"/>
</dbReference>
<dbReference type="GO" id="GO:0008270">
    <property type="term" value="F:zinc ion binding"/>
    <property type="evidence" value="ECO:0007669"/>
    <property type="project" value="InterPro"/>
</dbReference>
<dbReference type="GO" id="GO:0051301">
    <property type="term" value="P:cell division"/>
    <property type="evidence" value="ECO:0007669"/>
    <property type="project" value="TreeGrafter"/>
</dbReference>
<dbReference type="GO" id="GO:0051603">
    <property type="term" value="P:proteolysis involved in protein catabolic process"/>
    <property type="evidence" value="ECO:0007669"/>
    <property type="project" value="TreeGrafter"/>
</dbReference>
<dbReference type="CDD" id="cd19497">
    <property type="entry name" value="RecA-like_ClpX"/>
    <property type="match status" value="1"/>
</dbReference>
<dbReference type="FunFam" id="1.10.8.60:FF:000002">
    <property type="entry name" value="ATP-dependent Clp protease ATP-binding subunit ClpX"/>
    <property type="match status" value="1"/>
</dbReference>
<dbReference type="FunFam" id="3.40.50.300:FF:000005">
    <property type="entry name" value="ATP-dependent Clp protease ATP-binding subunit ClpX"/>
    <property type="match status" value="1"/>
</dbReference>
<dbReference type="Gene3D" id="1.10.8.60">
    <property type="match status" value="1"/>
</dbReference>
<dbReference type="Gene3D" id="6.20.220.10">
    <property type="entry name" value="ClpX chaperone, C4-type zinc finger domain"/>
    <property type="match status" value="1"/>
</dbReference>
<dbReference type="Gene3D" id="3.40.50.300">
    <property type="entry name" value="P-loop containing nucleotide triphosphate hydrolases"/>
    <property type="match status" value="1"/>
</dbReference>
<dbReference type="HAMAP" id="MF_00175">
    <property type="entry name" value="ClpX"/>
    <property type="match status" value="1"/>
</dbReference>
<dbReference type="InterPro" id="IPR003593">
    <property type="entry name" value="AAA+_ATPase"/>
</dbReference>
<dbReference type="InterPro" id="IPR050052">
    <property type="entry name" value="ATP-dep_Clp_protease_ClpX"/>
</dbReference>
<dbReference type="InterPro" id="IPR003959">
    <property type="entry name" value="ATPase_AAA_core"/>
</dbReference>
<dbReference type="InterPro" id="IPR019489">
    <property type="entry name" value="Clp_ATPase_C"/>
</dbReference>
<dbReference type="InterPro" id="IPR004487">
    <property type="entry name" value="Clp_protease_ATP-bd_su_ClpX"/>
</dbReference>
<dbReference type="InterPro" id="IPR046425">
    <property type="entry name" value="ClpX_bact"/>
</dbReference>
<dbReference type="InterPro" id="IPR027417">
    <property type="entry name" value="P-loop_NTPase"/>
</dbReference>
<dbReference type="InterPro" id="IPR010603">
    <property type="entry name" value="Znf_CppX_C4"/>
</dbReference>
<dbReference type="InterPro" id="IPR038366">
    <property type="entry name" value="Znf_CppX_C4_sf"/>
</dbReference>
<dbReference type="NCBIfam" id="TIGR00382">
    <property type="entry name" value="clpX"/>
    <property type="match status" value="1"/>
</dbReference>
<dbReference type="NCBIfam" id="NF003745">
    <property type="entry name" value="PRK05342.1"/>
    <property type="match status" value="1"/>
</dbReference>
<dbReference type="PANTHER" id="PTHR48102:SF7">
    <property type="entry name" value="ATP-DEPENDENT CLP PROTEASE ATP-BINDING SUBUNIT CLPX-LIKE, MITOCHONDRIAL"/>
    <property type="match status" value="1"/>
</dbReference>
<dbReference type="PANTHER" id="PTHR48102">
    <property type="entry name" value="ATP-DEPENDENT CLP PROTEASE ATP-BINDING SUBUNIT CLPX-LIKE, MITOCHONDRIAL-RELATED"/>
    <property type="match status" value="1"/>
</dbReference>
<dbReference type="Pfam" id="PF07724">
    <property type="entry name" value="AAA_2"/>
    <property type="match status" value="1"/>
</dbReference>
<dbReference type="Pfam" id="PF10431">
    <property type="entry name" value="ClpB_D2-small"/>
    <property type="match status" value="1"/>
</dbReference>
<dbReference type="Pfam" id="PF06689">
    <property type="entry name" value="zf-C4_ClpX"/>
    <property type="match status" value="1"/>
</dbReference>
<dbReference type="SMART" id="SM00382">
    <property type="entry name" value="AAA"/>
    <property type="match status" value="1"/>
</dbReference>
<dbReference type="SMART" id="SM01086">
    <property type="entry name" value="ClpB_D2-small"/>
    <property type="match status" value="1"/>
</dbReference>
<dbReference type="SMART" id="SM00994">
    <property type="entry name" value="zf-C4_ClpX"/>
    <property type="match status" value="1"/>
</dbReference>
<dbReference type="SUPFAM" id="SSF57716">
    <property type="entry name" value="Glucocorticoid receptor-like (DNA-binding domain)"/>
    <property type="match status" value="1"/>
</dbReference>
<dbReference type="SUPFAM" id="SSF52540">
    <property type="entry name" value="P-loop containing nucleoside triphosphate hydrolases"/>
    <property type="match status" value="1"/>
</dbReference>
<dbReference type="PROSITE" id="PS51902">
    <property type="entry name" value="CLPX_ZB"/>
    <property type="match status" value="1"/>
</dbReference>
<gene>
    <name evidence="1" type="primary">clpX</name>
    <name type="ordered locus">EUBREC_0990</name>
</gene>
<feature type="chain" id="PRO_1000203732" description="ATP-dependent Clp protease ATP-binding subunit ClpX">
    <location>
        <begin position="1"/>
        <end position="423"/>
    </location>
</feature>
<feature type="domain" description="ClpX-type ZB" evidence="2">
    <location>
        <begin position="1"/>
        <end position="53"/>
    </location>
</feature>
<feature type="binding site" evidence="2">
    <location>
        <position position="11"/>
    </location>
    <ligand>
        <name>Zn(2+)</name>
        <dbReference type="ChEBI" id="CHEBI:29105"/>
    </ligand>
</feature>
<feature type="binding site" evidence="2">
    <location>
        <position position="14"/>
    </location>
    <ligand>
        <name>Zn(2+)</name>
        <dbReference type="ChEBI" id="CHEBI:29105"/>
    </ligand>
</feature>
<feature type="binding site" evidence="2">
    <location>
        <position position="34"/>
    </location>
    <ligand>
        <name>Zn(2+)</name>
        <dbReference type="ChEBI" id="CHEBI:29105"/>
    </ligand>
</feature>
<feature type="binding site" evidence="2">
    <location>
        <position position="37"/>
    </location>
    <ligand>
        <name>Zn(2+)</name>
        <dbReference type="ChEBI" id="CHEBI:29105"/>
    </ligand>
</feature>
<feature type="binding site" evidence="1">
    <location>
        <begin position="120"/>
        <end position="127"/>
    </location>
    <ligand>
        <name>ATP</name>
        <dbReference type="ChEBI" id="CHEBI:30616"/>
    </ligand>
</feature>